<accession>Q00945</accession>
<organism>
    <name type="scientific">Lymnaea stagnalis</name>
    <name type="common">Great pond snail</name>
    <name type="synonym">Helix stagnalis</name>
    <dbReference type="NCBI Taxonomy" id="6523"/>
    <lineage>
        <taxon>Eukaryota</taxon>
        <taxon>Metazoa</taxon>
        <taxon>Spiralia</taxon>
        <taxon>Lophotrochozoa</taxon>
        <taxon>Mollusca</taxon>
        <taxon>Gastropoda</taxon>
        <taxon>Heterobranchia</taxon>
        <taxon>Euthyneura</taxon>
        <taxon>Panpulmonata</taxon>
        <taxon>Hygrophila</taxon>
        <taxon>Lymnaeoidea</taxon>
        <taxon>Lymnaeidae</taxon>
        <taxon>Lymnaea</taxon>
    </lineage>
</organism>
<feature type="signal peptide" evidence="4">
    <location>
        <begin position="1"/>
        <end position="26"/>
    </location>
</feature>
<feature type="peptide" id="PRO_0000020570" description="Lys-conopressin G">
    <location>
        <begin position="27"/>
        <end position="35"/>
    </location>
</feature>
<feature type="chain" id="PRO_0000020571" description="Neurophysin">
    <location>
        <begin position="39"/>
        <end position="155"/>
    </location>
</feature>
<feature type="modified residue" description="Glycine amide" evidence="1">
    <location>
        <position position="35"/>
    </location>
</feature>
<feature type="glycosylation site" description="N-linked (GlcNAc...) asparagine" evidence="3">
    <location>
        <position position="88"/>
    </location>
</feature>
<feature type="disulfide bond" evidence="2">
    <location>
        <begin position="27"/>
        <end position="32"/>
    </location>
</feature>
<feature type="disulfide bond" evidence="2">
    <location>
        <begin position="50"/>
        <end position="94"/>
    </location>
</feature>
<feature type="disulfide bond" evidence="2">
    <location>
        <begin position="53"/>
        <end position="67"/>
    </location>
</feature>
<feature type="disulfide bond" evidence="2">
    <location>
        <begin position="61"/>
        <end position="84"/>
    </location>
</feature>
<feature type="disulfide bond" evidence="2">
    <location>
        <begin position="68"/>
        <end position="74"/>
    </location>
</feature>
<feature type="disulfide bond" evidence="2">
    <location>
        <begin position="101"/>
        <end position="115"/>
    </location>
</feature>
<feature type="disulfide bond" evidence="2">
    <location>
        <begin position="109"/>
        <end position="127"/>
    </location>
</feature>
<feature type="disulfide bond" evidence="2">
    <location>
        <begin position="116"/>
        <end position="121"/>
    </location>
</feature>
<comment type="subcellular location">
    <subcellularLocation>
        <location>Secreted</location>
    </subcellularLocation>
</comment>
<comment type="domain">
    <text evidence="5">The cysteine framework is C-C.</text>
</comment>
<comment type="PTM">
    <text>Seven disulfide bonds are present in neurophysin.</text>
</comment>
<comment type="similarity">
    <text evidence="5">Belongs to the vasopressin/oxytocin family.</text>
</comment>
<keyword id="KW-0027">Amidation</keyword>
<keyword id="KW-0165">Cleavage on pair of basic residues</keyword>
<keyword id="KW-0903">Direct protein sequencing</keyword>
<keyword id="KW-1015">Disulfide bond</keyword>
<keyword id="KW-0325">Glycoprotein</keyword>
<keyword id="KW-0372">Hormone</keyword>
<keyword id="KW-0964">Secreted</keyword>
<keyword id="KW-0732">Signal</keyword>
<evidence type="ECO:0000250" key="1"/>
<evidence type="ECO:0000250" key="2">
    <source>
        <dbReference type="UniProtKB" id="P01175"/>
    </source>
</evidence>
<evidence type="ECO:0000255" key="3"/>
<evidence type="ECO:0000269" key="4">
    <source>
    </source>
</evidence>
<evidence type="ECO:0000305" key="5"/>
<protein>
    <recommendedName>
        <fullName>Conopressin/neurophysin</fullName>
    </recommendedName>
    <component>
        <recommendedName>
            <fullName>Lys-conopressin G</fullName>
        </recommendedName>
    </component>
    <component>
        <recommendedName>
            <fullName>Neurophysin</fullName>
        </recommendedName>
    </component>
</protein>
<dbReference type="EMBL" id="M86610">
    <property type="protein sequence ID" value="AAA29289.1"/>
    <property type="molecule type" value="mRNA"/>
</dbReference>
<dbReference type="EMBL" id="S79473">
    <property type="protein sequence ID" value="AAB35220.1"/>
    <property type="molecule type" value="Genomic_DNA"/>
</dbReference>
<dbReference type="EMBL" id="S79471">
    <property type="protein sequence ID" value="AAB35220.1"/>
    <property type="status" value="JOINED"/>
    <property type="molecule type" value="Genomic_DNA"/>
</dbReference>
<dbReference type="EMBL" id="S79472">
    <property type="protein sequence ID" value="AAB35220.1"/>
    <property type="status" value="JOINED"/>
    <property type="molecule type" value="Genomic_DNA"/>
</dbReference>
<dbReference type="PIR" id="A45293">
    <property type="entry name" value="A45293"/>
</dbReference>
<dbReference type="SMR" id="Q00945"/>
<dbReference type="GO" id="GO:0005615">
    <property type="term" value="C:extracellular space"/>
    <property type="evidence" value="ECO:0007669"/>
    <property type="project" value="TreeGrafter"/>
</dbReference>
<dbReference type="GO" id="GO:0030141">
    <property type="term" value="C:secretory granule"/>
    <property type="evidence" value="ECO:0007669"/>
    <property type="project" value="TreeGrafter"/>
</dbReference>
<dbReference type="GO" id="GO:0005185">
    <property type="term" value="F:neurohypophyseal hormone activity"/>
    <property type="evidence" value="ECO:0007669"/>
    <property type="project" value="InterPro"/>
</dbReference>
<dbReference type="FunFam" id="2.60.9.10:FF:000001">
    <property type="entry name" value="oxytocin-neurophysin 1"/>
    <property type="match status" value="1"/>
</dbReference>
<dbReference type="Gene3D" id="2.60.9.10">
    <property type="entry name" value="Neurohypophysial hormone domain"/>
    <property type="match status" value="1"/>
</dbReference>
<dbReference type="InterPro" id="IPR000981">
    <property type="entry name" value="Neurhyp_horm"/>
</dbReference>
<dbReference type="InterPro" id="IPR036387">
    <property type="entry name" value="Neurhyp_horm_dom_sf"/>
</dbReference>
<dbReference type="InterPro" id="IPR022423">
    <property type="entry name" value="Neurohypophysial_hormone_CS"/>
</dbReference>
<dbReference type="PANTHER" id="PTHR11681:SF5">
    <property type="entry name" value="ISOTOCIN"/>
    <property type="match status" value="1"/>
</dbReference>
<dbReference type="PANTHER" id="PTHR11681">
    <property type="entry name" value="NEUROPHYSIN"/>
    <property type="match status" value="1"/>
</dbReference>
<dbReference type="Pfam" id="PF00184">
    <property type="entry name" value="Hormone_5"/>
    <property type="match status" value="1"/>
</dbReference>
<dbReference type="PIRSF" id="PIRSF001815">
    <property type="entry name" value="Nonapeptide_hormone_precursor"/>
    <property type="match status" value="1"/>
</dbReference>
<dbReference type="PRINTS" id="PR00831">
    <property type="entry name" value="NEUROPHYSIN"/>
</dbReference>
<dbReference type="SMART" id="SM00003">
    <property type="entry name" value="NH"/>
    <property type="match status" value="1"/>
</dbReference>
<dbReference type="SUPFAM" id="SSF49606">
    <property type="entry name" value="Neurophysin II"/>
    <property type="match status" value="1"/>
</dbReference>
<dbReference type="PROSITE" id="PS00264">
    <property type="entry name" value="NEUROHYPOPHYS_HORM"/>
    <property type="match status" value="1"/>
</dbReference>
<name>CONO_LYMST</name>
<sequence length="155" mass="16197">MMSSLCGMPLTYLLTAAVLSLSLTDACFIRNCPKGGKRSLDTGMVTSRECMKCGPGGTGQCVGPSICCGQDFGCHVGTAEAAVCQQENDSSTPCLVKGEACGSRDAGNCVADGICCDSESCAVNDRCRDLDGNAQANRGDLIQLIHKLLKVRDYD</sequence>
<proteinExistence type="evidence at protein level"/>
<reference key="1">
    <citation type="journal article" date="1992" name="Proc. Natl. Acad. Sci. U.S.A.">
        <title>Evolution of the vasopressin/oxytocin superfamily: characterization of a cDNA encoding a vasopressin-related precursor, preproconopressin, from the mollusc Lymnaea stagnalis.</title>
        <authorList>
            <person name="van Kesteren R.E."/>
            <person name="Smit A.B."/>
            <person name="Dirks R.W."/>
            <person name="de With N.D."/>
            <person name="Geraerts W.P.M."/>
            <person name="Joosse J."/>
        </authorList>
    </citation>
    <scope>NUCLEOTIDE SEQUENCE [MRNA]</scope>
    <scope>PROTEIN SEQUENCE OF 27-35</scope>
    <source>
        <tissue>CNS</tissue>
    </source>
</reference>
<reference key="2">
    <citation type="journal article" date="1995" name="J. Neurosci.">
        <title>Structural and functional evolution of the vasopressin/oxytocin superfamily: vasopressin-related conopressin is the only member present in Lymnaea, and is involved in the control of sexual behavior.</title>
        <authorList>
            <person name="van Kesteren R.E."/>
            <person name="Smit A.B."/>
            <person name="de Lange R.P."/>
            <person name="Kits K.S."/>
            <person name="Golen F.A."/>
            <person name="der Schors R.C."/>
            <person name="de With N.D."/>
            <person name="Burke J.F."/>
            <person name="Geraerts W.P.M."/>
        </authorList>
    </citation>
    <scope>NUCLEOTIDE SEQUENCE [GENOMIC DNA]</scope>
</reference>